<dbReference type="EC" id="7.1.1.8"/>
<dbReference type="EMBL" id="AY387506">
    <property type="protein sequence ID" value="AAR32735.1"/>
    <property type="molecule type" value="Genomic_DNA"/>
</dbReference>
<dbReference type="EMBL" id="AY387505">
    <property type="protein sequence ID" value="AAR32735.1"/>
    <property type="status" value="JOINED"/>
    <property type="molecule type" value="Genomic_DNA"/>
</dbReference>
<dbReference type="IntAct" id="Q69BK1">
    <property type="interactions" value="1"/>
</dbReference>
<dbReference type="GO" id="GO:0005743">
    <property type="term" value="C:mitochondrial inner membrane"/>
    <property type="evidence" value="ECO:0007669"/>
    <property type="project" value="UniProtKB-SubCell"/>
</dbReference>
<dbReference type="GO" id="GO:0051537">
    <property type="term" value="F:2 iron, 2 sulfur cluster binding"/>
    <property type="evidence" value="ECO:0007669"/>
    <property type="project" value="UniProtKB-KW"/>
</dbReference>
<dbReference type="GO" id="GO:0046872">
    <property type="term" value="F:metal ion binding"/>
    <property type="evidence" value="ECO:0007669"/>
    <property type="project" value="UniProtKB-KW"/>
</dbReference>
<dbReference type="GO" id="GO:0008121">
    <property type="term" value="F:ubiquinol-cytochrome-c reductase activity"/>
    <property type="evidence" value="ECO:0007669"/>
    <property type="project" value="UniProtKB-EC"/>
</dbReference>
<dbReference type="CDD" id="cd03470">
    <property type="entry name" value="Rieske_cytochrome_bc1"/>
    <property type="match status" value="1"/>
</dbReference>
<dbReference type="FunFam" id="1.20.5.270:FF:000001">
    <property type="entry name" value="Cytochrome b-c1 complex subunit Rieske, mitochondrial"/>
    <property type="match status" value="1"/>
</dbReference>
<dbReference type="FunFam" id="2.10.210.10:FF:000001">
    <property type="entry name" value="Cytochrome b-c1 complex subunit Rieske, mitochondrial"/>
    <property type="match status" value="1"/>
</dbReference>
<dbReference type="FunFam" id="2.102.10.10:FF:000001">
    <property type="entry name" value="Cytochrome b-c1 complex subunit Rieske, mitochondrial"/>
    <property type="match status" value="1"/>
</dbReference>
<dbReference type="Gene3D" id="2.10.210.10">
    <property type="entry name" value="Cytochrome Bc1 Complex, Chain I"/>
    <property type="match status" value="1"/>
</dbReference>
<dbReference type="Gene3D" id="2.102.10.10">
    <property type="entry name" value="Rieske [2Fe-2S] iron-sulphur domain"/>
    <property type="match status" value="1"/>
</dbReference>
<dbReference type="Gene3D" id="1.20.5.270">
    <property type="entry name" value="Ubiquinol cytochrome reductase, transmembrane domain"/>
    <property type="match status" value="1"/>
</dbReference>
<dbReference type="InterPro" id="IPR037008">
    <property type="entry name" value="bc1_Rieske_TM_sf"/>
</dbReference>
<dbReference type="InterPro" id="IPR011070">
    <property type="entry name" value="Globular_prot_asu/bsu"/>
</dbReference>
<dbReference type="InterPro" id="IPR017941">
    <property type="entry name" value="Rieske_2Fe-2S"/>
</dbReference>
<dbReference type="InterPro" id="IPR036922">
    <property type="entry name" value="Rieske_2Fe-2S_sf"/>
</dbReference>
<dbReference type="InterPro" id="IPR014349">
    <property type="entry name" value="Rieske_Fe-S_prot"/>
</dbReference>
<dbReference type="InterPro" id="IPR005805">
    <property type="entry name" value="Rieske_Fe-S_prot_C"/>
</dbReference>
<dbReference type="InterPro" id="IPR004192">
    <property type="entry name" value="Rieske_TM"/>
</dbReference>
<dbReference type="InterPro" id="IPR006317">
    <property type="entry name" value="Ubiquinol_cyt_c_Rdtase_Fe-S-su"/>
</dbReference>
<dbReference type="InterPro" id="IPR015248">
    <property type="entry name" value="UQCRFS1_N"/>
</dbReference>
<dbReference type="NCBIfam" id="TIGR01416">
    <property type="entry name" value="Rieske_proteo"/>
    <property type="match status" value="1"/>
</dbReference>
<dbReference type="PANTHER" id="PTHR10134">
    <property type="entry name" value="CYTOCHROME B-C1 COMPLEX SUBUNIT RIESKE, MITOCHONDRIAL"/>
    <property type="match status" value="1"/>
</dbReference>
<dbReference type="Pfam" id="PF00355">
    <property type="entry name" value="Rieske"/>
    <property type="match status" value="1"/>
</dbReference>
<dbReference type="Pfam" id="PF09165">
    <property type="entry name" value="Ubiq-Cytc-red_N"/>
    <property type="match status" value="1"/>
</dbReference>
<dbReference type="Pfam" id="PF02921">
    <property type="entry name" value="UCR_TM"/>
    <property type="match status" value="1"/>
</dbReference>
<dbReference type="PRINTS" id="PR00162">
    <property type="entry name" value="RIESKE"/>
</dbReference>
<dbReference type="SUPFAM" id="SSF50022">
    <property type="entry name" value="ISP domain"/>
    <property type="match status" value="1"/>
</dbReference>
<dbReference type="SUPFAM" id="SSF81502">
    <property type="entry name" value="ISP transmembrane anchor"/>
    <property type="match status" value="1"/>
</dbReference>
<dbReference type="SUPFAM" id="SSF56568">
    <property type="entry name" value="Non-globular alpha+beta subunits of globular proteins"/>
    <property type="match status" value="1"/>
</dbReference>
<dbReference type="PROSITE" id="PS51296">
    <property type="entry name" value="RIESKE"/>
    <property type="match status" value="1"/>
</dbReference>
<reference key="1">
    <citation type="submission" date="2003-08" db="EMBL/GenBank/DDBJ databases">
        <title>Molecular evolution of the iron sulfur protein and subunit 9 of complex III of the electron transport chain in primates.</title>
        <authorList>
            <person name="Doan J.W."/>
            <person name="Wildman D.E."/>
            <person name="Schmidt T.R."/>
            <person name="Weiss M.L."/>
            <person name="Goodman M."/>
            <person name="Grossman L.I."/>
        </authorList>
    </citation>
    <scope>NUCLEOTIDE SEQUENCE [GENOMIC DNA]</scope>
</reference>
<protein>
    <recommendedName>
        <fullName>Cytochrome b-c1 complex subunit Rieske, mitochondrial</fullName>
        <ecNumber>7.1.1.8</ecNumber>
    </recommendedName>
    <alternativeName>
        <fullName>Complex III subunit 5</fullName>
    </alternativeName>
    <alternativeName>
        <fullName>Cytochrome b-c1 complex subunit 5</fullName>
    </alternativeName>
    <alternativeName>
        <fullName>Rieske iron-sulfur protein</fullName>
        <shortName>RISP</shortName>
    </alternativeName>
    <alternativeName>
        <fullName evidence="7">Rieske protein UQCRFS1</fullName>
    </alternativeName>
    <alternativeName>
        <fullName>Ubiquinol-cytochrome c reductase iron-sulfur subunit</fullName>
    </alternativeName>
    <component>
        <recommendedName>
            <fullName evidence="2">Cytochrome b-c1 complex subunit 9</fullName>
            <shortName evidence="2">Su9</shortName>
            <shortName evidence="2">Subunit 9</shortName>
        </recommendedName>
        <alternativeName>
            <fullName evidence="2">8 kDa subunit 9</fullName>
        </alternativeName>
        <alternativeName>
            <fullName>Complex III subunit IX</fullName>
        </alternativeName>
        <alternativeName>
            <fullName>Cytochrome b-c1 complex subunit 11</fullName>
        </alternativeName>
        <alternativeName>
            <fullName>UQCRFS1 mitochondrial targeting sequence</fullName>
            <shortName>UQCRFS1 MTS</shortName>
        </alternativeName>
        <alternativeName>
            <fullName evidence="2">Ubiquinol-cytochrome c reductase 8 kDa protein</fullName>
        </alternativeName>
    </component>
</protein>
<comment type="function">
    <molecule>Cytochrome b-c1 complex subunit Rieske, mitochondrial</molecule>
    <text evidence="1 3">Component of the ubiquinol-cytochrome c oxidoreductase, a multisubunit transmembrane complex that is part of the mitochondrial electron transport chain which drives oxidative phosphorylation. The respiratory chain contains 3 multisubunit complexes succinate dehydrogenase (complex II, CII), ubiquinol-cytochrome c oxidoreductase (cytochrome b-c1 complex, complex III, CIII) and cytochrome c oxidase (complex IV, CIV), that cooperate to transfer electrons derived from NADH and succinate to molecular oxygen, creating an electrochemical gradient over the inner membrane that drives transmembrane transport and the ATP synthase. The cytochrome b-c1 complex catalyzes electron transfer from ubiquinol to cytochrome c, linking this redox reaction to translocation of protons across the mitochondrial inner membrane, with protons being carried across the membrane as hydrogens on the quinol. In the process called Q cycle, 2 protons are consumed from the matrix, 4 protons are released into the intermembrane space and 2 electrons are passed to cytochrome c. The Rieske protein is a catalytic core subunit containing a [2Fe-2S] iron-sulfur cluster. It cycles between 2 conformational states during catalysis to transfer electrons from the quinol bound in the Q(0) site in cytochrome b to cytochrome c1 (By similarity). Incorporation of UQCRFS1 is the penultimate step in complex III assembly (By similarity).</text>
</comment>
<comment type="function">
    <molecule>Cytochrome b-c1 complex subunit 9</molecule>
    <text evidence="2 3 5">Component of the ubiquinol-cytochrome c oxidoreductase (cytochrome b-c1 complex, complex III, CIII). UQCRFS1 undergoes proteolytic processing once it is incorporated in the complex III dimer. One of the fragments, called subunit 9, corresponds to its mitochondrial targeting sequence (MTS) (By similarity). The proteolytic processing is necessary for the correct insertion of UQCRFS1 in the complex III dimer, but the persistence of UQCRFS1-derived fragments may prevent newly imported UQCRFS1 to be processed and assembled into complex III and is detrimental for the complex III structure and function (By similarity).</text>
</comment>
<comment type="catalytic activity">
    <reaction evidence="1">
        <text>a quinol + 2 Fe(III)-[cytochrome c](out) = a quinone + 2 Fe(II)-[cytochrome c](out) + 2 H(+)(out)</text>
        <dbReference type="Rhea" id="RHEA:11484"/>
        <dbReference type="Rhea" id="RHEA-COMP:10350"/>
        <dbReference type="Rhea" id="RHEA-COMP:14399"/>
        <dbReference type="ChEBI" id="CHEBI:15378"/>
        <dbReference type="ChEBI" id="CHEBI:24646"/>
        <dbReference type="ChEBI" id="CHEBI:29033"/>
        <dbReference type="ChEBI" id="CHEBI:29034"/>
        <dbReference type="ChEBI" id="CHEBI:132124"/>
        <dbReference type="EC" id="7.1.1.8"/>
    </reaction>
</comment>
<comment type="cofactor">
    <cofactor evidence="6">
        <name>[2Fe-2S] cluster</name>
        <dbReference type="ChEBI" id="CHEBI:190135"/>
    </cofactor>
    <text evidence="3 6">Binds 1 [2Fe-2S] cluster per subunit. Fe-S cluster delivery to the Rieske protein is mediated by components of the iron sulfur (Fe-S) cluster assembly machinery that reside in the mitochondrial matrix (including HSC20 and LYRM7) (By similarity).</text>
</comment>
<comment type="subunit">
    <molecule>Cytochrome b-c1 complex subunit Rieske, mitochondrial</molecule>
    <text evidence="2 3">Component of the ubiquinol-cytochrome c oxidoreductase (cytochrome b-c1 complex, complex III, CIII), a multisubunit enzyme composed of 11 subunits. The complex is composed of 3 respiratory subunits cytochrome b, cytochrome c1 and Rieske protein UQCRFS1, 2 core protein subunits UQCRC1/QCR1 and UQCRC2/QCR2, and 6 low-molecular weight protein subunits UQCRH/QCR6, UQCRB/QCR7, UQCRQ/QCR8, UQCR10/QCR9, UQCR11/QCR10 and subunit 9, the cleavage product of Rieske protein UQCRFS1. The complex exists as an obligatory dimer and forms supercomplexes (SCs) in the inner mitochondrial membrane with NADH-ubiquinone oxidoreductase (complex I, CI) and cytochrome c oxidase (complex IV, CIV), resulting in different assemblies (supercomplex SCI(1)III(2)IV(1) and megacomplex MCI(2)III(2)IV(2)) (By similarity). Incorporation of the Rieske protein UQCRFS1 is the penultimate step in complex III assembly. Interacts with TTC19, which is involved in the clearance of UQCRFS1 fragments (By similarity).</text>
</comment>
<comment type="subunit">
    <molecule>Cytochrome b-c1 complex subunit 9</molecule>
    <text evidence="2">Component of the ubiquinol-cytochrome c oxidoreductase (cytochrome b-c1 complex, complex III, CIII). Subunit 9 corresponds to the mitochondrial targeting sequence (MTS) of Rieske protein UQCRFS1. It is retained after processing and incorporated inside complex III, where it remains bound to the complex and localizes between the 2 core subunits UQCRC1/QCR1 and UQCRC2/QCR2.</text>
</comment>
<comment type="subcellular location">
    <subcellularLocation>
        <location evidence="4">Mitochondrion inner membrane</location>
        <topology evidence="4">Single-pass membrane protein</topology>
    </subcellularLocation>
</comment>
<comment type="PTM">
    <text evidence="5">Proteolytic processing is necessary for the correct insertion of UQCRFS1 in the complex III dimer. Several fragments are generated during UQCRFS1 insertion, most probably due to the endogenous matrix-processing peptidase (MPP) activity of the 2 core protein subunits UQCRC1/QCR1 and UQCRC2/QCR2, which are homologous to the 2 mitochondrial-processing peptidase (MPP) subunits beta-MPP and alpha-MPP respectively. The action of the protease is also necessary for the clearance of the UQCRFS1 fragments.</text>
</comment>
<comment type="miscellaneous">
    <text>The Rieske protein is a high potential 2Fe-2S protein.</text>
</comment>
<comment type="similarity">
    <text evidence="7">Belongs to the Rieske iron-sulfur protein family.</text>
</comment>
<comment type="caution">
    <text evidence="2 3">Several peptides are generated during UQCRFS1 insertion. According to some authors, the identification of the transit peptide as the subunit 9, does not necessary imply that it must be considered as a structural subunit of the complex III dimer as additional fragments from UQCRFS1 are also present.</text>
</comment>
<sequence>MLSVAARSGPFAPVLSATSRGVAGALRPLVQATVPATPEXPVLDLKRPXLSRESLSGQAVRRPLVASVGLNVPASVCYSHTDVKVPDFYDYRRLEVLDSTKSSRESSEARKGFSYLVTAVTTVGVAYAAKNVVTQFISSMSASADVLAMAKIEINLSDIPEGKNMAFKWRGKPLFVRHRTQKEIEEEAAVELSQLRDPQHDLDRVKKPEWVILIGVCTHLGCVPIANAGDFGGYYCPCHGSHYDASGRIRLGPAPLNLEVPPYEFTGDDVVVVG</sequence>
<feature type="chain" id="PRO_0000307238" description="Cytochrome b-c1 complex subunit 9" evidence="5">
    <location>
        <begin position="1"/>
        <end position="78"/>
    </location>
</feature>
<feature type="chain" id="PRO_0000030661" description="Cytochrome b-c1 complex subunit Rieske, mitochondrial">
    <location>
        <begin position="79"/>
        <end position="274"/>
    </location>
</feature>
<feature type="topological domain" description="Mitochondrial matrix" evidence="2">
    <location>
        <begin position="79"/>
        <end position="103"/>
    </location>
</feature>
<feature type="transmembrane region" description="Helical" evidence="2">
    <location>
        <begin position="104"/>
        <end position="140"/>
    </location>
</feature>
<feature type="topological domain" description="Mitochondrial intermembrane" evidence="2">
    <location>
        <begin position="141"/>
        <end position="274"/>
    </location>
</feature>
<feature type="domain" description="Rieske" evidence="6">
    <location>
        <begin position="187"/>
        <end position="272"/>
    </location>
</feature>
<feature type="binding site" evidence="2">
    <location>
        <position position="217"/>
    </location>
    <ligand>
        <name>[2Fe-2S] cluster</name>
        <dbReference type="ChEBI" id="CHEBI:190135"/>
    </ligand>
</feature>
<feature type="binding site" evidence="2">
    <location>
        <position position="219"/>
    </location>
    <ligand>
        <name>[2Fe-2S] cluster</name>
        <dbReference type="ChEBI" id="CHEBI:190135"/>
    </ligand>
</feature>
<feature type="binding site" evidence="2">
    <location>
        <position position="236"/>
    </location>
    <ligand>
        <name>[2Fe-2S] cluster</name>
        <dbReference type="ChEBI" id="CHEBI:190135"/>
    </ligand>
</feature>
<feature type="binding site" evidence="2">
    <location>
        <position position="239"/>
    </location>
    <ligand>
        <name>[2Fe-2S] cluster</name>
        <dbReference type="ChEBI" id="CHEBI:190135"/>
    </ligand>
</feature>
<feature type="binding site" evidence="2">
    <location>
        <position position="241"/>
    </location>
    <ligand>
        <name>[2Fe-2S] cluster</name>
        <dbReference type="ChEBI" id="CHEBI:190135"/>
    </ligand>
</feature>
<feature type="disulfide bond" evidence="2">
    <location>
        <begin position="222"/>
        <end position="238"/>
    </location>
</feature>
<organism>
    <name type="scientific">Chlorocebus aethiops</name>
    <name type="common">Green monkey</name>
    <name type="synonym">Cercopithecus aethiops</name>
    <dbReference type="NCBI Taxonomy" id="9534"/>
    <lineage>
        <taxon>Eukaryota</taxon>
        <taxon>Metazoa</taxon>
        <taxon>Chordata</taxon>
        <taxon>Craniata</taxon>
        <taxon>Vertebrata</taxon>
        <taxon>Euteleostomi</taxon>
        <taxon>Mammalia</taxon>
        <taxon>Eutheria</taxon>
        <taxon>Euarchontoglires</taxon>
        <taxon>Primates</taxon>
        <taxon>Haplorrhini</taxon>
        <taxon>Catarrhini</taxon>
        <taxon>Cercopithecidae</taxon>
        <taxon>Cercopithecinae</taxon>
        <taxon>Chlorocebus</taxon>
    </lineage>
</organism>
<proteinExistence type="inferred from homology"/>
<gene>
    <name type="primary">UQCRFS1</name>
</gene>
<accession>Q69BK1</accession>
<evidence type="ECO:0000250" key="1">
    <source>
        <dbReference type="UniProtKB" id="P08067"/>
    </source>
</evidence>
<evidence type="ECO:0000250" key="2">
    <source>
        <dbReference type="UniProtKB" id="P13272"/>
    </source>
</evidence>
<evidence type="ECO:0000250" key="3">
    <source>
        <dbReference type="UniProtKB" id="P47985"/>
    </source>
</evidence>
<evidence type="ECO:0000250" key="4">
    <source>
        <dbReference type="UniProtKB" id="Q5ZLR5"/>
    </source>
</evidence>
<evidence type="ECO:0000250" key="5">
    <source>
        <dbReference type="UniProtKB" id="Q9CR68"/>
    </source>
</evidence>
<evidence type="ECO:0000255" key="6">
    <source>
        <dbReference type="PROSITE-ProRule" id="PRU00628"/>
    </source>
</evidence>
<evidence type="ECO:0000305" key="7"/>
<name>UCRI_CHLAE</name>
<keyword id="KW-0001">2Fe-2S</keyword>
<keyword id="KW-1015">Disulfide bond</keyword>
<keyword id="KW-0249">Electron transport</keyword>
<keyword id="KW-0408">Iron</keyword>
<keyword id="KW-0411">Iron-sulfur</keyword>
<keyword id="KW-0472">Membrane</keyword>
<keyword id="KW-0479">Metal-binding</keyword>
<keyword id="KW-0496">Mitochondrion</keyword>
<keyword id="KW-0999">Mitochondrion inner membrane</keyword>
<keyword id="KW-0679">Respiratory chain</keyword>
<keyword id="KW-0809">Transit peptide</keyword>
<keyword id="KW-1278">Translocase</keyword>
<keyword id="KW-0812">Transmembrane</keyword>
<keyword id="KW-1133">Transmembrane helix</keyword>
<keyword id="KW-0813">Transport</keyword>